<proteinExistence type="predicted"/>
<dbReference type="EMBL" id="U00089">
    <property type="protein sequence ID" value="AAB96208.1"/>
    <property type="molecule type" value="Genomic_DNA"/>
</dbReference>
<dbReference type="PIR" id="S73886">
    <property type="entry name" value="S73886"/>
</dbReference>
<dbReference type="RefSeq" id="NP_109963.1">
    <property type="nucleotide sequence ID" value="NC_000912.1"/>
</dbReference>
<dbReference type="RefSeq" id="WP_010874632.1">
    <property type="nucleotide sequence ID" value="NZ_OU342337.1"/>
</dbReference>
<dbReference type="SMR" id="P75502"/>
<dbReference type="IntAct" id="P75502">
    <property type="interactions" value="1"/>
</dbReference>
<dbReference type="STRING" id="272634.MPN_275"/>
<dbReference type="EnsemblBacteria" id="AAB96208">
    <property type="protein sequence ID" value="AAB96208"/>
    <property type="gene ID" value="MPN_275"/>
</dbReference>
<dbReference type="KEGG" id="mpn:MPN_275"/>
<dbReference type="PATRIC" id="fig|272634.6.peg.295"/>
<dbReference type="HOGENOM" id="CLU_140930_1_2_14"/>
<dbReference type="OrthoDB" id="399030at2"/>
<dbReference type="BioCyc" id="MPNE272634:G1GJ3-432-MONOMER"/>
<dbReference type="Proteomes" id="UP000000808">
    <property type="component" value="Chromosome"/>
</dbReference>
<dbReference type="GO" id="GO:0003677">
    <property type="term" value="F:DNA binding"/>
    <property type="evidence" value="ECO:0007669"/>
    <property type="project" value="InterPro"/>
</dbReference>
<dbReference type="Gene3D" id="3.30.1310.10">
    <property type="entry name" value="Nucleoid-associated protein YbaB-like domain"/>
    <property type="match status" value="1"/>
</dbReference>
<dbReference type="InterPro" id="IPR036894">
    <property type="entry name" value="YbaB-like_sf"/>
</dbReference>
<dbReference type="InterPro" id="IPR004401">
    <property type="entry name" value="YbaB/EbfC"/>
</dbReference>
<dbReference type="NCBIfam" id="TIGR00103">
    <property type="entry name" value="DNA_YbaB_EbfC"/>
    <property type="match status" value="1"/>
</dbReference>
<dbReference type="Pfam" id="PF02575">
    <property type="entry name" value="YbaB_DNA_bd"/>
    <property type="match status" value="1"/>
</dbReference>
<dbReference type="PIRSF" id="PIRSF004555">
    <property type="entry name" value="UCP004555"/>
    <property type="match status" value="1"/>
</dbReference>
<dbReference type="SUPFAM" id="SSF82607">
    <property type="entry name" value="YbaB-like"/>
    <property type="match status" value="1"/>
</dbReference>
<sequence>MSFKKITEMMRQAERQSKQKALDFEQKLFEYSYKNAAIKIIIFGNLTIKSITIDPALIDPEDKVTLEEMITEAVNEAVGDVKAKYDQLMEEAMPQMPGLF</sequence>
<feature type="chain" id="PRO_0000210437" description="Uncharacterized protein MG134 homolog">
    <location>
        <begin position="1"/>
        <end position="100"/>
    </location>
</feature>
<reference key="1">
    <citation type="journal article" date="1996" name="Nucleic Acids Res.">
        <title>Complete sequence analysis of the genome of the bacterium Mycoplasma pneumoniae.</title>
        <authorList>
            <person name="Himmelreich R."/>
            <person name="Hilbert H."/>
            <person name="Plagens H."/>
            <person name="Pirkl E."/>
            <person name="Li B.-C."/>
            <person name="Herrmann R."/>
        </authorList>
    </citation>
    <scope>NUCLEOTIDE SEQUENCE [LARGE SCALE GENOMIC DNA]</scope>
    <source>
        <strain>ATCC 29342 / M129 / Subtype 1</strain>
    </source>
</reference>
<gene>
    <name type="ordered locus">MPN_275</name>
    <name type="ORF">A65_orf100</name>
    <name type="ORF">MP560</name>
</gene>
<organism>
    <name type="scientific">Mycoplasma pneumoniae (strain ATCC 29342 / M129 / Subtype 1)</name>
    <name type="common">Mycoplasmoides pneumoniae</name>
    <dbReference type="NCBI Taxonomy" id="272634"/>
    <lineage>
        <taxon>Bacteria</taxon>
        <taxon>Bacillati</taxon>
        <taxon>Mycoplasmatota</taxon>
        <taxon>Mycoplasmoidales</taxon>
        <taxon>Mycoplasmoidaceae</taxon>
        <taxon>Mycoplasmoides</taxon>
    </lineage>
</organism>
<keyword id="KW-1185">Reference proteome</keyword>
<protein>
    <recommendedName>
        <fullName>Uncharacterized protein MG134 homolog</fullName>
    </recommendedName>
</protein>
<name>Y275_MYCPN</name>
<accession>P75502</accession>